<reference key="1">
    <citation type="journal article" date="2004" name="Mol. Phylogenet. Evol.">
        <title>A phylogeny of the extant Phocidae inferred from complete mitochondrial DNA coding regions.</title>
        <authorList>
            <person name="Davis C.S."/>
            <person name="Delisle I."/>
            <person name="Stirling I."/>
            <person name="Siniff D.B."/>
            <person name="Strobeck C."/>
        </authorList>
    </citation>
    <scope>NUCLEOTIDE SEQUENCE [GENOMIC DNA]</scope>
</reference>
<accession>Q679A1</accession>
<geneLocation type="mitochondrion"/>
<keyword id="KW-0249">Electron transport</keyword>
<keyword id="KW-0472">Membrane</keyword>
<keyword id="KW-0496">Mitochondrion</keyword>
<keyword id="KW-0999">Mitochondrion inner membrane</keyword>
<keyword id="KW-0520">NAD</keyword>
<keyword id="KW-0679">Respiratory chain</keyword>
<keyword id="KW-1278">Translocase</keyword>
<keyword id="KW-0812">Transmembrane</keyword>
<keyword id="KW-1133">Transmembrane helix</keyword>
<keyword id="KW-0813">Transport</keyword>
<keyword id="KW-0830">Ubiquinone</keyword>
<organism>
    <name type="scientific">Gulo gulo</name>
    <name type="common">Wolverine</name>
    <name type="synonym">Gluton</name>
    <dbReference type="NCBI Taxonomy" id="48420"/>
    <lineage>
        <taxon>Eukaryota</taxon>
        <taxon>Metazoa</taxon>
        <taxon>Chordata</taxon>
        <taxon>Craniata</taxon>
        <taxon>Vertebrata</taxon>
        <taxon>Euteleostomi</taxon>
        <taxon>Mammalia</taxon>
        <taxon>Eutheria</taxon>
        <taxon>Laurasiatheria</taxon>
        <taxon>Carnivora</taxon>
        <taxon>Caniformia</taxon>
        <taxon>Musteloidea</taxon>
        <taxon>Mustelidae</taxon>
        <taxon>Guloninae</taxon>
        <taxon>Gulo</taxon>
    </lineage>
</organism>
<gene>
    <name type="primary">MT-ND4L</name>
    <name type="synonym">MTND4L</name>
    <name type="synonym">NADH4L</name>
    <name type="synonym">ND4L</name>
</gene>
<dbReference type="EC" id="7.1.1.2"/>
<dbReference type="EMBL" id="AY377243">
    <property type="protein sequence ID" value="AAQ93782.1"/>
    <property type="molecule type" value="Genomic_DNA"/>
</dbReference>
<dbReference type="SMR" id="Q679A1"/>
<dbReference type="GO" id="GO:0005743">
    <property type="term" value="C:mitochondrial inner membrane"/>
    <property type="evidence" value="ECO:0000250"/>
    <property type="project" value="UniProtKB"/>
</dbReference>
<dbReference type="GO" id="GO:0045271">
    <property type="term" value="C:respiratory chain complex I"/>
    <property type="evidence" value="ECO:0000250"/>
    <property type="project" value="UniProtKB"/>
</dbReference>
<dbReference type="GO" id="GO:0008137">
    <property type="term" value="F:NADH dehydrogenase (ubiquinone) activity"/>
    <property type="evidence" value="ECO:0000250"/>
    <property type="project" value="UniProtKB"/>
</dbReference>
<dbReference type="GO" id="GO:0042773">
    <property type="term" value="P:ATP synthesis coupled electron transport"/>
    <property type="evidence" value="ECO:0007669"/>
    <property type="project" value="InterPro"/>
</dbReference>
<dbReference type="FunFam" id="1.10.287.3510:FF:000002">
    <property type="entry name" value="NADH-ubiquinone oxidoreductase chain 4L"/>
    <property type="match status" value="1"/>
</dbReference>
<dbReference type="Gene3D" id="1.10.287.3510">
    <property type="match status" value="1"/>
</dbReference>
<dbReference type="InterPro" id="IPR001133">
    <property type="entry name" value="NADH_UbQ_OxRdtase_chain4L/K"/>
</dbReference>
<dbReference type="InterPro" id="IPR039428">
    <property type="entry name" value="NUOK/Mnh_C1-like"/>
</dbReference>
<dbReference type="PANTHER" id="PTHR11434:SF0">
    <property type="entry name" value="NADH-UBIQUINONE OXIDOREDUCTASE CHAIN 4L"/>
    <property type="match status" value="1"/>
</dbReference>
<dbReference type="PANTHER" id="PTHR11434">
    <property type="entry name" value="NADH-UBIQUINONE OXIDOREDUCTASE SUBUNIT ND4L"/>
    <property type="match status" value="1"/>
</dbReference>
<dbReference type="Pfam" id="PF00420">
    <property type="entry name" value="Oxidored_q2"/>
    <property type="match status" value="1"/>
</dbReference>
<comment type="function">
    <text evidence="1">Core subunit of the mitochondrial membrane respiratory chain NADH dehydrogenase (Complex I) which catalyzes electron transfer from NADH through the respiratory chain, using ubiquinone as an electron acceptor. Part of the enzyme membrane arm which is embedded in the lipid bilayer and involved in proton translocation.</text>
</comment>
<comment type="catalytic activity">
    <reaction evidence="1">
        <text>a ubiquinone + NADH + 5 H(+)(in) = a ubiquinol + NAD(+) + 4 H(+)(out)</text>
        <dbReference type="Rhea" id="RHEA:29091"/>
        <dbReference type="Rhea" id="RHEA-COMP:9565"/>
        <dbReference type="Rhea" id="RHEA-COMP:9566"/>
        <dbReference type="ChEBI" id="CHEBI:15378"/>
        <dbReference type="ChEBI" id="CHEBI:16389"/>
        <dbReference type="ChEBI" id="CHEBI:17976"/>
        <dbReference type="ChEBI" id="CHEBI:57540"/>
        <dbReference type="ChEBI" id="CHEBI:57945"/>
        <dbReference type="EC" id="7.1.1.2"/>
    </reaction>
    <physiologicalReaction direction="left-to-right" evidence="1">
        <dbReference type="Rhea" id="RHEA:29092"/>
    </physiologicalReaction>
</comment>
<comment type="subunit">
    <text evidence="2">Core subunit of respiratory chain NADH dehydrogenase (Complex I) which is composed of 45 different subunits.</text>
</comment>
<comment type="subcellular location">
    <subcellularLocation>
        <location evidence="2">Mitochondrion inner membrane</location>
        <topology evidence="3">Multi-pass membrane protein</topology>
    </subcellularLocation>
</comment>
<comment type="similarity">
    <text evidence="4">Belongs to the complex I subunit 4L family.</text>
</comment>
<evidence type="ECO:0000250" key="1">
    <source>
        <dbReference type="UniProtKB" id="P03901"/>
    </source>
</evidence>
<evidence type="ECO:0000250" key="2">
    <source>
        <dbReference type="UniProtKB" id="P03902"/>
    </source>
</evidence>
<evidence type="ECO:0000255" key="3"/>
<evidence type="ECO:0000305" key="4"/>
<protein>
    <recommendedName>
        <fullName>NADH-ubiquinone oxidoreductase chain 4L</fullName>
        <ecNumber>7.1.1.2</ecNumber>
    </recommendedName>
    <alternativeName>
        <fullName>NADH dehydrogenase subunit 4L</fullName>
    </alternativeName>
</protein>
<name>NU4LM_GULGU</name>
<proteinExistence type="inferred from homology"/>
<sequence>MSMVYINIFLAFTLSFMGLLIYRSHLMSSLLCLEGMMLSLFVMMTVTILTNHLTLASMTPIILLVFAACEAALGLSLLVMISNTYGTDYVQNLNLLQC</sequence>
<feature type="chain" id="PRO_0000275023" description="NADH-ubiquinone oxidoreductase chain 4L">
    <location>
        <begin position="1"/>
        <end position="98"/>
    </location>
</feature>
<feature type="transmembrane region" description="Helical" evidence="3">
    <location>
        <begin position="1"/>
        <end position="21"/>
    </location>
</feature>
<feature type="transmembrane region" description="Helical" evidence="3">
    <location>
        <begin position="30"/>
        <end position="50"/>
    </location>
</feature>
<feature type="transmembrane region" description="Helical" evidence="3">
    <location>
        <begin position="61"/>
        <end position="81"/>
    </location>
</feature>